<sequence>MSVTPNPDQHVAQLIDANLDRAREGLRVIEDWCRFSLKNKDMVITLKNWRQQLGKEHYEIYKNARSSSSDQSAGLSHPAQKERILPQQILSANFARIQEALRVIEEFSRISHPKLSKISAQIRYEIYDLEVIILKISNLNMLDEKLKSCKLCLITRTHPELIKTVLLALKAGVTMIQYRCKETPDNQMIAEAKELASICKSYNSLFLINDRADIALAVDADGVHLGQKDMPIQTARKIIGHQKIIGLSTHSLEEIQNATSQGCNYIGIGPIFKTKSKQNDLSLGIDFFSKINLKTNLPWFAIGGINKDNIDKIKEVGIKRVAVINAIMGAEDPYLASKELLGKLKK</sequence>
<keyword id="KW-0460">Magnesium</keyword>
<keyword id="KW-0479">Metal-binding</keyword>
<keyword id="KW-1185">Reference proteome</keyword>
<keyword id="KW-0784">Thiamine biosynthesis</keyword>
<keyword id="KW-0808">Transferase</keyword>
<proteinExistence type="inferred from homology"/>
<name>THIE_PROMA</name>
<comment type="function">
    <text evidence="1">Condenses 4-methyl-5-(beta-hydroxyethyl)thiazole monophosphate (THZ-P) and 2-methyl-4-amino-5-hydroxymethyl pyrimidine pyrophosphate (HMP-PP) to form thiamine monophosphate (TMP).</text>
</comment>
<comment type="catalytic activity">
    <reaction evidence="1">
        <text>2-[(2R,5Z)-2-carboxy-4-methylthiazol-5(2H)-ylidene]ethyl phosphate + 4-amino-2-methyl-5-(diphosphooxymethyl)pyrimidine + 2 H(+) = thiamine phosphate + CO2 + diphosphate</text>
        <dbReference type="Rhea" id="RHEA:47844"/>
        <dbReference type="ChEBI" id="CHEBI:15378"/>
        <dbReference type="ChEBI" id="CHEBI:16526"/>
        <dbReference type="ChEBI" id="CHEBI:33019"/>
        <dbReference type="ChEBI" id="CHEBI:37575"/>
        <dbReference type="ChEBI" id="CHEBI:57841"/>
        <dbReference type="ChEBI" id="CHEBI:62899"/>
        <dbReference type="EC" id="2.5.1.3"/>
    </reaction>
</comment>
<comment type="catalytic activity">
    <reaction evidence="1">
        <text>2-(2-carboxy-4-methylthiazol-5-yl)ethyl phosphate + 4-amino-2-methyl-5-(diphosphooxymethyl)pyrimidine + 2 H(+) = thiamine phosphate + CO2 + diphosphate</text>
        <dbReference type="Rhea" id="RHEA:47848"/>
        <dbReference type="ChEBI" id="CHEBI:15378"/>
        <dbReference type="ChEBI" id="CHEBI:16526"/>
        <dbReference type="ChEBI" id="CHEBI:33019"/>
        <dbReference type="ChEBI" id="CHEBI:37575"/>
        <dbReference type="ChEBI" id="CHEBI:57841"/>
        <dbReference type="ChEBI" id="CHEBI:62890"/>
        <dbReference type="EC" id="2.5.1.3"/>
    </reaction>
</comment>
<comment type="catalytic activity">
    <reaction evidence="1">
        <text>4-methyl-5-(2-phosphooxyethyl)-thiazole + 4-amino-2-methyl-5-(diphosphooxymethyl)pyrimidine + H(+) = thiamine phosphate + diphosphate</text>
        <dbReference type="Rhea" id="RHEA:22328"/>
        <dbReference type="ChEBI" id="CHEBI:15378"/>
        <dbReference type="ChEBI" id="CHEBI:33019"/>
        <dbReference type="ChEBI" id="CHEBI:37575"/>
        <dbReference type="ChEBI" id="CHEBI:57841"/>
        <dbReference type="ChEBI" id="CHEBI:58296"/>
        <dbReference type="EC" id="2.5.1.3"/>
    </reaction>
</comment>
<comment type="cofactor">
    <cofactor evidence="1">
        <name>Mg(2+)</name>
        <dbReference type="ChEBI" id="CHEBI:18420"/>
    </cofactor>
    <text evidence="1">Binds 1 Mg(2+) ion per subunit.</text>
</comment>
<comment type="pathway">
    <text evidence="1">Cofactor biosynthesis; thiamine diphosphate biosynthesis; thiamine phosphate from 4-amino-2-methyl-5-diphosphomethylpyrimidine and 4-methyl-5-(2-phosphoethyl)-thiazole: step 1/1.</text>
</comment>
<comment type="similarity">
    <text evidence="1">Belongs to the thiamine-phosphate synthase family.</text>
</comment>
<dbReference type="EC" id="2.5.1.3" evidence="1"/>
<dbReference type="EMBL" id="AE017126">
    <property type="protein sequence ID" value="AAQ00392.1"/>
    <property type="molecule type" value="Genomic_DNA"/>
</dbReference>
<dbReference type="RefSeq" id="NP_875739.1">
    <property type="nucleotide sequence ID" value="NC_005042.1"/>
</dbReference>
<dbReference type="RefSeq" id="WP_011125499.1">
    <property type="nucleotide sequence ID" value="NC_005042.1"/>
</dbReference>
<dbReference type="SMR" id="Q7VAV5"/>
<dbReference type="STRING" id="167539.Pro_1348"/>
<dbReference type="EnsemblBacteria" id="AAQ00392">
    <property type="protein sequence ID" value="AAQ00392"/>
    <property type="gene ID" value="Pro_1348"/>
</dbReference>
<dbReference type="KEGG" id="pma:Pro_1348"/>
<dbReference type="PATRIC" id="fig|167539.5.peg.1414"/>
<dbReference type="eggNOG" id="COG0352">
    <property type="taxonomic scope" value="Bacteria"/>
</dbReference>
<dbReference type="HOGENOM" id="CLU_064900_0_0_3"/>
<dbReference type="OrthoDB" id="9812206at2"/>
<dbReference type="UniPathway" id="UPA00060">
    <property type="reaction ID" value="UER00141"/>
</dbReference>
<dbReference type="Proteomes" id="UP000001420">
    <property type="component" value="Chromosome"/>
</dbReference>
<dbReference type="GO" id="GO:0005737">
    <property type="term" value="C:cytoplasm"/>
    <property type="evidence" value="ECO:0007669"/>
    <property type="project" value="TreeGrafter"/>
</dbReference>
<dbReference type="GO" id="GO:0000287">
    <property type="term" value="F:magnesium ion binding"/>
    <property type="evidence" value="ECO:0007669"/>
    <property type="project" value="UniProtKB-UniRule"/>
</dbReference>
<dbReference type="GO" id="GO:0004789">
    <property type="term" value="F:thiamine-phosphate diphosphorylase activity"/>
    <property type="evidence" value="ECO:0007669"/>
    <property type="project" value="UniProtKB-UniRule"/>
</dbReference>
<dbReference type="GO" id="GO:0009228">
    <property type="term" value="P:thiamine biosynthetic process"/>
    <property type="evidence" value="ECO:0007669"/>
    <property type="project" value="UniProtKB-KW"/>
</dbReference>
<dbReference type="GO" id="GO:0009229">
    <property type="term" value="P:thiamine diphosphate biosynthetic process"/>
    <property type="evidence" value="ECO:0007669"/>
    <property type="project" value="UniProtKB-UniRule"/>
</dbReference>
<dbReference type="CDD" id="cd00564">
    <property type="entry name" value="TMP_TenI"/>
    <property type="match status" value="1"/>
</dbReference>
<dbReference type="FunFam" id="3.20.20.70:FF:000096">
    <property type="entry name" value="Thiamine-phosphate synthase"/>
    <property type="match status" value="1"/>
</dbReference>
<dbReference type="Gene3D" id="3.20.20.70">
    <property type="entry name" value="Aldolase class I"/>
    <property type="match status" value="1"/>
</dbReference>
<dbReference type="HAMAP" id="MF_00097">
    <property type="entry name" value="TMP_synthase"/>
    <property type="match status" value="1"/>
</dbReference>
<dbReference type="HAMAP" id="MF_01327">
    <property type="entry name" value="TMP_synthase_cyanobact"/>
    <property type="match status" value="1"/>
</dbReference>
<dbReference type="InterPro" id="IPR013785">
    <property type="entry name" value="Aldolase_TIM"/>
</dbReference>
<dbReference type="InterPro" id="IPR036206">
    <property type="entry name" value="ThiamineP_synth_sf"/>
</dbReference>
<dbReference type="InterPro" id="IPR022998">
    <property type="entry name" value="ThiamineP_synth_TenI"/>
</dbReference>
<dbReference type="InterPro" id="IPR041397">
    <property type="entry name" value="ThiD2"/>
</dbReference>
<dbReference type="InterPro" id="IPR034291">
    <property type="entry name" value="TMP_synthase"/>
</dbReference>
<dbReference type="InterPro" id="IPR016229">
    <property type="entry name" value="TMP_synthase_cyanobac_bac"/>
</dbReference>
<dbReference type="NCBIfam" id="NF002727">
    <property type="entry name" value="PRK02615.1"/>
    <property type="match status" value="1"/>
</dbReference>
<dbReference type="NCBIfam" id="TIGR00693">
    <property type="entry name" value="thiE"/>
    <property type="match status" value="1"/>
</dbReference>
<dbReference type="PANTHER" id="PTHR20857">
    <property type="entry name" value="THIAMINE-PHOSPHATE PYROPHOSPHORYLASE"/>
    <property type="match status" value="1"/>
</dbReference>
<dbReference type="PANTHER" id="PTHR20857:SF15">
    <property type="entry name" value="THIAMINE-PHOSPHATE SYNTHASE"/>
    <property type="match status" value="1"/>
</dbReference>
<dbReference type="Pfam" id="PF17792">
    <property type="entry name" value="ThiD2"/>
    <property type="match status" value="1"/>
</dbReference>
<dbReference type="Pfam" id="PF02581">
    <property type="entry name" value="TMP-TENI"/>
    <property type="match status" value="1"/>
</dbReference>
<dbReference type="PIRSF" id="PIRSF000512">
    <property type="entry name" value="TMP_PPase_Cyanobac_prd"/>
    <property type="match status" value="1"/>
</dbReference>
<dbReference type="SUPFAM" id="SSF51391">
    <property type="entry name" value="Thiamin phosphate synthase"/>
    <property type="match status" value="1"/>
</dbReference>
<reference key="1">
    <citation type="journal article" date="2003" name="Proc. Natl. Acad. Sci. U.S.A.">
        <title>Genome sequence of the cyanobacterium Prochlorococcus marinus SS120, a nearly minimal oxyphototrophic genome.</title>
        <authorList>
            <person name="Dufresne A."/>
            <person name="Salanoubat M."/>
            <person name="Partensky F."/>
            <person name="Artiguenave F."/>
            <person name="Axmann I.M."/>
            <person name="Barbe V."/>
            <person name="Duprat S."/>
            <person name="Galperin M.Y."/>
            <person name="Koonin E.V."/>
            <person name="Le Gall F."/>
            <person name="Makarova K.S."/>
            <person name="Ostrowski M."/>
            <person name="Oztas S."/>
            <person name="Robert C."/>
            <person name="Rogozin I.B."/>
            <person name="Scanlan D.J."/>
            <person name="Tandeau de Marsac N."/>
            <person name="Weissenbach J."/>
            <person name="Wincker P."/>
            <person name="Wolf Y.I."/>
            <person name="Hess W.R."/>
        </authorList>
    </citation>
    <scope>NUCLEOTIDE SEQUENCE [LARGE SCALE GENOMIC DNA]</scope>
    <source>
        <strain>SARG / CCMP1375 / SS120</strain>
    </source>
</reference>
<gene>
    <name evidence="1" type="primary">thiE</name>
    <name type="ordered locus">Pro_1348</name>
</gene>
<accession>Q7VAV5</accession>
<feature type="chain" id="PRO_0000157080" description="Thiamine-phosphate synthase">
    <location>
        <begin position="1"/>
        <end position="346"/>
    </location>
</feature>
<feature type="region of interest" description="Unknown">
    <location>
        <begin position="1"/>
        <end position="125"/>
    </location>
</feature>
<feature type="region of interest" description="Thiamine-phosphate synthase">
    <location>
        <begin position="126"/>
        <end position="346"/>
    </location>
</feature>
<feature type="binding site" evidence="1">
    <location>
        <begin position="177"/>
        <end position="181"/>
    </location>
    <ligand>
        <name>4-amino-2-methyl-5-(diphosphooxymethyl)pyrimidine</name>
        <dbReference type="ChEBI" id="CHEBI:57841"/>
    </ligand>
</feature>
<feature type="binding site" evidence="1">
    <location>
        <position position="209"/>
    </location>
    <ligand>
        <name>4-amino-2-methyl-5-(diphosphooxymethyl)pyrimidine</name>
        <dbReference type="ChEBI" id="CHEBI:57841"/>
    </ligand>
</feature>
<feature type="binding site" evidence="1">
    <location>
        <position position="210"/>
    </location>
    <ligand>
        <name>Mg(2+)</name>
        <dbReference type="ChEBI" id="CHEBI:18420"/>
    </ligand>
</feature>
<feature type="binding site" evidence="1">
    <location>
        <position position="229"/>
    </location>
    <ligand>
        <name>Mg(2+)</name>
        <dbReference type="ChEBI" id="CHEBI:18420"/>
    </ligand>
</feature>
<feature type="binding site" evidence="1">
    <location>
        <position position="248"/>
    </location>
    <ligand>
        <name>4-amino-2-methyl-5-(diphosphooxymethyl)pyrimidine</name>
        <dbReference type="ChEBI" id="CHEBI:57841"/>
    </ligand>
</feature>
<feature type="binding site" evidence="1">
    <location>
        <begin position="274"/>
        <end position="276"/>
    </location>
    <ligand>
        <name>2-[(2R,5Z)-2-carboxy-4-methylthiazol-5(2H)-ylidene]ethyl phosphate</name>
        <dbReference type="ChEBI" id="CHEBI:62899"/>
    </ligand>
</feature>
<feature type="binding site" evidence="1">
    <location>
        <position position="277"/>
    </location>
    <ligand>
        <name>4-amino-2-methyl-5-(diphosphooxymethyl)pyrimidine</name>
        <dbReference type="ChEBI" id="CHEBI:57841"/>
    </ligand>
</feature>
<feature type="binding site" evidence="1">
    <location>
        <position position="304"/>
    </location>
    <ligand>
        <name>2-[(2R,5Z)-2-carboxy-4-methylthiazol-5(2H)-ylidene]ethyl phosphate</name>
        <dbReference type="ChEBI" id="CHEBI:62899"/>
    </ligand>
</feature>
<protein>
    <recommendedName>
        <fullName evidence="1">Thiamine-phosphate synthase</fullName>
        <shortName evidence="1">TP synthase</shortName>
        <shortName evidence="1">TPS</shortName>
        <ecNumber evidence="1">2.5.1.3</ecNumber>
    </recommendedName>
    <alternativeName>
        <fullName evidence="1">Thiamine-phosphate pyrophosphorylase</fullName>
        <shortName evidence="1">TMP pyrophosphorylase</shortName>
        <shortName evidence="1">TMP-PPase</shortName>
    </alternativeName>
</protein>
<organism>
    <name type="scientific">Prochlorococcus marinus (strain SARG / CCMP1375 / SS120)</name>
    <dbReference type="NCBI Taxonomy" id="167539"/>
    <lineage>
        <taxon>Bacteria</taxon>
        <taxon>Bacillati</taxon>
        <taxon>Cyanobacteriota</taxon>
        <taxon>Cyanophyceae</taxon>
        <taxon>Synechococcales</taxon>
        <taxon>Prochlorococcaceae</taxon>
        <taxon>Prochlorococcus</taxon>
    </lineage>
</organism>
<evidence type="ECO:0000255" key="1">
    <source>
        <dbReference type="HAMAP-Rule" id="MF_01327"/>
    </source>
</evidence>